<organism>
    <name type="scientific">Homo sapiens</name>
    <name type="common">Human</name>
    <dbReference type="NCBI Taxonomy" id="9606"/>
    <lineage>
        <taxon>Eukaryota</taxon>
        <taxon>Metazoa</taxon>
        <taxon>Chordata</taxon>
        <taxon>Craniata</taxon>
        <taxon>Vertebrata</taxon>
        <taxon>Euteleostomi</taxon>
        <taxon>Mammalia</taxon>
        <taxon>Eutheria</taxon>
        <taxon>Euarchontoglires</taxon>
        <taxon>Primates</taxon>
        <taxon>Haplorrhini</taxon>
        <taxon>Catarrhini</taxon>
        <taxon>Hominidae</taxon>
        <taxon>Homo</taxon>
    </lineage>
</organism>
<name>MIS12_HUMAN</name>
<reference evidence="8" key="1">
    <citation type="journal article" date="2001" name="Genome Res.">
        <title>Towards a catalog of human genes and proteins: sequencing and analysis of 500 novel complete protein coding human cDNAs.</title>
        <authorList>
            <person name="Wiemann S."/>
            <person name="Weil B."/>
            <person name="Wellenreuther R."/>
            <person name="Gassenhuber J."/>
            <person name="Glassl S."/>
            <person name="Ansorge W."/>
            <person name="Boecher M."/>
            <person name="Bloecker H."/>
            <person name="Bauersachs S."/>
            <person name="Blum H."/>
            <person name="Lauber J."/>
            <person name="Duesterhoeft A."/>
            <person name="Beyer A."/>
            <person name="Koehrer K."/>
            <person name="Strack N."/>
            <person name="Mewes H.-W."/>
            <person name="Ottenwaelder B."/>
            <person name="Obermaier B."/>
            <person name="Tampe J."/>
            <person name="Heubner D."/>
            <person name="Wambutt R."/>
            <person name="Korn B."/>
            <person name="Klein M."/>
            <person name="Poustka A."/>
        </authorList>
    </citation>
    <scope>NUCLEOTIDE SEQUENCE [LARGE SCALE MRNA]</scope>
    <source>
        <tissue evidence="8">Testis</tissue>
    </source>
</reference>
<reference key="2">
    <citation type="journal article" date="2004" name="Nat. Genet.">
        <title>Complete sequencing and characterization of 21,243 full-length human cDNAs.</title>
        <authorList>
            <person name="Ota T."/>
            <person name="Suzuki Y."/>
            <person name="Nishikawa T."/>
            <person name="Otsuki T."/>
            <person name="Sugiyama T."/>
            <person name="Irie R."/>
            <person name="Wakamatsu A."/>
            <person name="Hayashi K."/>
            <person name="Sato H."/>
            <person name="Nagai K."/>
            <person name="Kimura K."/>
            <person name="Makita H."/>
            <person name="Sekine M."/>
            <person name="Obayashi M."/>
            <person name="Nishi T."/>
            <person name="Shibahara T."/>
            <person name="Tanaka T."/>
            <person name="Ishii S."/>
            <person name="Yamamoto J."/>
            <person name="Saito K."/>
            <person name="Kawai Y."/>
            <person name="Isono Y."/>
            <person name="Nakamura Y."/>
            <person name="Nagahari K."/>
            <person name="Murakami K."/>
            <person name="Yasuda T."/>
            <person name="Iwayanagi T."/>
            <person name="Wagatsuma M."/>
            <person name="Shiratori A."/>
            <person name="Sudo H."/>
            <person name="Hosoiri T."/>
            <person name="Kaku Y."/>
            <person name="Kodaira H."/>
            <person name="Kondo H."/>
            <person name="Sugawara M."/>
            <person name="Takahashi M."/>
            <person name="Kanda K."/>
            <person name="Yokoi T."/>
            <person name="Furuya T."/>
            <person name="Kikkawa E."/>
            <person name="Omura Y."/>
            <person name="Abe K."/>
            <person name="Kamihara K."/>
            <person name="Katsuta N."/>
            <person name="Sato K."/>
            <person name="Tanikawa M."/>
            <person name="Yamazaki M."/>
            <person name="Ninomiya K."/>
            <person name="Ishibashi T."/>
            <person name="Yamashita H."/>
            <person name="Murakawa K."/>
            <person name="Fujimori K."/>
            <person name="Tanai H."/>
            <person name="Kimata M."/>
            <person name="Watanabe M."/>
            <person name="Hiraoka S."/>
            <person name="Chiba Y."/>
            <person name="Ishida S."/>
            <person name="Ono Y."/>
            <person name="Takiguchi S."/>
            <person name="Watanabe S."/>
            <person name="Yosida M."/>
            <person name="Hotuta T."/>
            <person name="Kusano J."/>
            <person name="Kanehori K."/>
            <person name="Takahashi-Fujii A."/>
            <person name="Hara H."/>
            <person name="Tanase T.-O."/>
            <person name="Nomura Y."/>
            <person name="Togiya S."/>
            <person name="Komai F."/>
            <person name="Hara R."/>
            <person name="Takeuchi K."/>
            <person name="Arita M."/>
            <person name="Imose N."/>
            <person name="Musashino K."/>
            <person name="Yuuki H."/>
            <person name="Oshima A."/>
            <person name="Sasaki N."/>
            <person name="Aotsuka S."/>
            <person name="Yoshikawa Y."/>
            <person name="Matsunawa H."/>
            <person name="Ichihara T."/>
            <person name="Shiohata N."/>
            <person name="Sano S."/>
            <person name="Moriya S."/>
            <person name="Momiyama H."/>
            <person name="Satoh N."/>
            <person name="Takami S."/>
            <person name="Terashima Y."/>
            <person name="Suzuki O."/>
            <person name="Nakagawa S."/>
            <person name="Senoh A."/>
            <person name="Mizoguchi H."/>
            <person name="Goto Y."/>
            <person name="Shimizu F."/>
            <person name="Wakebe H."/>
            <person name="Hishigaki H."/>
            <person name="Watanabe T."/>
            <person name="Sugiyama A."/>
            <person name="Takemoto M."/>
            <person name="Kawakami B."/>
            <person name="Yamazaki M."/>
            <person name="Watanabe K."/>
            <person name="Kumagai A."/>
            <person name="Itakura S."/>
            <person name="Fukuzumi Y."/>
            <person name="Fujimori Y."/>
            <person name="Komiyama M."/>
            <person name="Tashiro H."/>
            <person name="Tanigami A."/>
            <person name="Fujiwara T."/>
            <person name="Ono T."/>
            <person name="Yamada K."/>
            <person name="Fujii Y."/>
            <person name="Ozaki K."/>
            <person name="Hirao M."/>
            <person name="Ohmori Y."/>
            <person name="Kawabata A."/>
            <person name="Hikiji T."/>
            <person name="Kobatake N."/>
            <person name="Inagaki H."/>
            <person name="Ikema Y."/>
            <person name="Okamoto S."/>
            <person name="Okitani R."/>
            <person name="Kawakami T."/>
            <person name="Noguchi S."/>
            <person name="Itoh T."/>
            <person name="Shigeta K."/>
            <person name="Senba T."/>
            <person name="Matsumura K."/>
            <person name="Nakajima Y."/>
            <person name="Mizuno T."/>
            <person name="Morinaga M."/>
            <person name="Sasaki M."/>
            <person name="Togashi T."/>
            <person name="Oyama M."/>
            <person name="Hata H."/>
            <person name="Watanabe M."/>
            <person name="Komatsu T."/>
            <person name="Mizushima-Sugano J."/>
            <person name="Satoh T."/>
            <person name="Shirai Y."/>
            <person name="Takahashi Y."/>
            <person name="Nakagawa K."/>
            <person name="Okumura K."/>
            <person name="Nagase T."/>
            <person name="Nomura N."/>
            <person name="Kikuchi H."/>
            <person name="Masuho Y."/>
            <person name="Yamashita R."/>
            <person name="Nakai K."/>
            <person name="Yada T."/>
            <person name="Nakamura Y."/>
            <person name="Ohara O."/>
            <person name="Isogai T."/>
            <person name="Sugano S."/>
        </authorList>
    </citation>
    <scope>NUCLEOTIDE SEQUENCE [LARGE SCALE MRNA]</scope>
</reference>
<reference evidence="9" key="3">
    <citation type="submission" date="2004-06" db="EMBL/GenBank/DDBJ databases">
        <title>Cloning of human full open reading frames in Gateway(TM) system entry vector (pDONR201).</title>
        <authorList>
            <person name="Ebert L."/>
            <person name="Schick M."/>
            <person name="Neubert P."/>
            <person name="Schatten R."/>
            <person name="Henze S."/>
            <person name="Korn B."/>
        </authorList>
    </citation>
    <scope>NUCLEOTIDE SEQUENCE [LARGE SCALE MRNA]</scope>
</reference>
<reference evidence="7" key="4">
    <citation type="journal article" date="2004" name="Genome Res.">
        <title>The status, quality, and expansion of the NIH full-length cDNA project: the Mammalian Gene Collection (MGC).</title>
        <authorList>
            <consortium name="The MGC Project Team"/>
        </authorList>
    </citation>
    <scope>NUCLEOTIDE SEQUENCE [LARGE SCALE MRNA]</scope>
    <source>
        <tissue evidence="7">Eye</tissue>
    </source>
</reference>
<reference evidence="6" key="5">
    <citation type="journal article" date="2003" name="J. Cell Biol.">
        <title>Human centromere chromatin protein hMis12, essential for equal segregation, is independent of CENP-A loading pathway.</title>
        <authorList>
            <person name="Goshima G."/>
            <person name="Kiyomitsu T."/>
            <person name="Yoda K."/>
            <person name="Yanagida M."/>
        </authorList>
    </citation>
    <scope>FUNCTION</scope>
    <scope>SUBCELLULAR LOCATION</scope>
</reference>
<reference evidence="6" key="6">
    <citation type="journal article" date="2004" name="Nat. Cell Biol.">
        <title>A conserved Mis12 centromere complex is linked to heterochromatic HP1 and outer kinetochore protein Zwint-1.</title>
        <authorList>
            <person name="Obuse C."/>
            <person name="Iwasaki O."/>
            <person name="Kiyomitsu T."/>
            <person name="Goshima G."/>
            <person name="Toyoda Y."/>
            <person name="Yanagida M."/>
        </authorList>
    </citation>
    <scope>FUNCTION</scope>
    <scope>INTERACTION WITH KNL1; CBX3; CBX5; DSN1; NDC80; NSL1; PMF1 AND ZWINT</scope>
    <scope>SUBCELLULAR LOCATION</scope>
</reference>
<reference evidence="6" key="7">
    <citation type="journal article" date="2006" name="J. Cell Biol.">
        <title>The human Mis12 complex is required for kinetochore assembly and proper chromosome segregation.</title>
        <authorList>
            <person name="Kline S.L."/>
            <person name="Cheeseman I.M."/>
            <person name="Hori T."/>
            <person name="Fukagawa T."/>
            <person name="Desai A."/>
        </authorList>
    </citation>
    <scope>FUNCTION</scope>
    <scope>COMPONENT OF MIS12 COMPLEX</scope>
    <scope>SUBCELLULAR LOCATION</scope>
</reference>
<reference key="8">
    <citation type="journal article" date="2011" name="BMC Syst. Biol.">
        <title>Initial characterization of the human central proteome.</title>
        <authorList>
            <person name="Burkard T.R."/>
            <person name="Planyavsky M."/>
            <person name="Kaupe I."/>
            <person name="Breitwieser F.P."/>
            <person name="Buerckstuemmer T."/>
            <person name="Bennett K.L."/>
            <person name="Superti-Furga G."/>
            <person name="Colinge J."/>
        </authorList>
    </citation>
    <scope>IDENTIFICATION BY MASS SPECTROMETRY [LARGE SCALE ANALYSIS]</scope>
</reference>
<reference key="9">
    <citation type="journal article" date="2013" name="Curr. Biol.">
        <title>Lateral to end-on conversion of chromosome-microtubule attachment requires kinesins CENP-E and MCAK.</title>
        <authorList>
            <person name="Shrestha R.L."/>
            <person name="Draviam V.M."/>
        </authorList>
    </citation>
    <scope>FUNCTION</scope>
</reference>
<reference key="10">
    <citation type="journal article" date="2013" name="Curr. Biol.">
        <authorList>
            <person name="Shrestha R.L."/>
            <person name="Draviam V.M."/>
        </authorList>
    </citation>
    <scope>ERRATUM OF PUBMED:23891108</scope>
</reference>
<feature type="chain" id="PRO_0000248234" description="Protein MIS12 homolog">
    <location>
        <begin position="1"/>
        <end position="205"/>
    </location>
</feature>
<feature type="coiled-coil region" evidence="1">
    <location>
        <begin position="108"/>
        <end position="205"/>
    </location>
</feature>
<feature type="sequence variant" id="VAR_034106" description="In dbSNP:rs16954781.">
    <original>M</original>
    <variation>V</variation>
    <location>
        <position position="21"/>
    </location>
</feature>
<feature type="helix" evidence="11">
    <location>
        <begin position="7"/>
        <end position="13"/>
    </location>
</feature>
<feature type="helix" evidence="11">
    <location>
        <begin position="17"/>
        <end position="49"/>
    </location>
</feature>
<feature type="strand" evidence="11">
    <location>
        <begin position="50"/>
        <end position="52"/>
    </location>
</feature>
<feature type="helix" evidence="11">
    <location>
        <begin position="57"/>
        <end position="88"/>
    </location>
</feature>
<feature type="helix" evidence="11">
    <location>
        <begin position="100"/>
        <end position="105"/>
    </location>
</feature>
<feature type="helix" evidence="11">
    <location>
        <begin position="111"/>
        <end position="168"/>
    </location>
</feature>
<feature type="helix" evidence="11">
    <location>
        <begin position="174"/>
        <end position="204"/>
    </location>
</feature>
<gene>
    <name evidence="10" type="primary">MIS12</name>
</gene>
<sequence length="205" mass="24140">MSVDPMTYEAQFFGFTPQTCMLRIYIAFQDYLFEVMQAVEQVILKKLDGIPDCDISPVQIRKCTEKFLCFMKGHFDNLFSKMEQLFLQLILRIPSNILLPEDKCKETPYSEEDFQHLQKEIEQLQEKYKTELCTKQALLAELEEQKIVQAKLKQTLTFFDELHNVGRDHGTSDFRESLVSLVQNSRKLQNIRDNVEKESKRLKIS</sequence>
<comment type="function">
    <text evidence="2 3 4 5">Part of the MIS12 complex which is required for normal chromosome alignment and segregation and for kinetochore formation during mitosis (PubMed:12515822, PubMed:15502821, PubMed:16585270). Essential for proper kinetochore microtubule attachments (PubMed:23891108).</text>
</comment>
<comment type="subunit">
    <text evidence="3">Component of the MIS12 complex composed of MIS12, DSN1, NSL1 and PMF1. Also interacts with KNL1, CBX3, CBX5, NDC80 and ZWINT.</text>
</comment>
<comment type="interaction">
    <interactant intactId="EBI-1001205">
        <id>Q9H081</id>
    </interactant>
    <interactant intactId="EBI-1001144">
        <id>Q9H410</id>
        <label>DSN1</label>
    </interactant>
    <organismsDiffer>false</organismsDiffer>
    <experiments>16</experiments>
</comment>
<comment type="interaction">
    <interactant intactId="EBI-1001205">
        <id>Q9H081</id>
    </interactant>
    <interactant intactId="EBI-713832">
        <id>Q6P1K2</id>
        <label>PMF1</label>
    </interactant>
    <organismsDiffer>false</organismsDiffer>
    <experiments>31</experiments>
</comment>
<comment type="subcellular location">
    <subcellularLocation>
        <location evidence="2 3">Chromosome</location>
        <location evidence="2 3">Centromere</location>
        <location evidence="2 3">Kinetochore</location>
    </subcellularLocation>
    <text evidence="2 3">Associated with the kinetochore.</text>
</comment>
<comment type="similarity">
    <text evidence="6">Belongs to the mis12 family.</text>
</comment>
<comment type="sequence caution" evidence="6">
    <conflict type="frameshift">
        <sequence resource="EMBL" id="AK056072"/>
    </conflict>
</comment>
<proteinExistence type="evidence at protein level"/>
<accession>Q9H081</accession>
<accession>Q96N24</accession>
<protein>
    <recommendedName>
        <fullName>Protein MIS12 homolog</fullName>
    </recommendedName>
</protein>
<evidence type="ECO:0000255" key="1"/>
<evidence type="ECO:0000269" key="2">
    <source>
    </source>
</evidence>
<evidence type="ECO:0000269" key="3">
    <source>
    </source>
</evidence>
<evidence type="ECO:0000269" key="4">
    <source>
    </source>
</evidence>
<evidence type="ECO:0000269" key="5">
    <source>
    </source>
</evidence>
<evidence type="ECO:0000305" key="6"/>
<evidence type="ECO:0000312" key="7">
    <source>
        <dbReference type="EMBL" id="AAH00229.1"/>
    </source>
</evidence>
<evidence type="ECO:0000312" key="8">
    <source>
        <dbReference type="EMBL" id="CAB66840.1"/>
    </source>
</evidence>
<evidence type="ECO:0000312" key="9">
    <source>
        <dbReference type="EMBL" id="CAG38491.1"/>
    </source>
</evidence>
<evidence type="ECO:0000312" key="10">
    <source>
        <dbReference type="HGNC" id="HGNC:24967"/>
    </source>
</evidence>
<evidence type="ECO:0007829" key="11">
    <source>
        <dbReference type="PDB" id="8PPR"/>
    </source>
</evidence>
<keyword id="KW-0002">3D-structure</keyword>
<keyword id="KW-0131">Cell cycle</keyword>
<keyword id="KW-0132">Cell division</keyword>
<keyword id="KW-0137">Centromere</keyword>
<keyword id="KW-0158">Chromosome</keyword>
<keyword id="KW-0159">Chromosome partition</keyword>
<keyword id="KW-0175">Coiled coil</keyword>
<keyword id="KW-0995">Kinetochore</keyword>
<keyword id="KW-0498">Mitosis</keyword>
<keyword id="KW-1267">Proteomics identification</keyword>
<keyword id="KW-1185">Reference proteome</keyword>
<dbReference type="EMBL" id="AL136906">
    <property type="protein sequence ID" value="CAB66840.1"/>
    <property type="molecule type" value="mRNA"/>
</dbReference>
<dbReference type="EMBL" id="AK056072">
    <property type="status" value="NOT_ANNOTATED_CDS"/>
    <property type="molecule type" value="mRNA"/>
</dbReference>
<dbReference type="EMBL" id="CR533460">
    <property type="protein sequence ID" value="CAG38491.1"/>
    <property type="molecule type" value="mRNA"/>
</dbReference>
<dbReference type="EMBL" id="BC000229">
    <property type="protein sequence ID" value="AAH00229.1"/>
    <property type="molecule type" value="mRNA"/>
</dbReference>
<dbReference type="CCDS" id="CCDS11074.1"/>
<dbReference type="RefSeq" id="NP_001245146.1">
    <property type="nucleotide sequence ID" value="NM_001258217.2"/>
</dbReference>
<dbReference type="RefSeq" id="NP_001245147.1">
    <property type="nucleotide sequence ID" value="NM_001258218.2"/>
</dbReference>
<dbReference type="RefSeq" id="NP_001245148.1">
    <property type="nucleotide sequence ID" value="NM_001258219.1"/>
</dbReference>
<dbReference type="RefSeq" id="NP_001245149.1">
    <property type="nucleotide sequence ID" value="NM_001258220.1"/>
</dbReference>
<dbReference type="RefSeq" id="NP_076944.1">
    <property type="nucleotide sequence ID" value="NM_024039.3"/>
</dbReference>
<dbReference type="RefSeq" id="XP_005256854.1">
    <property type="nucleotide sequence ID" value="XM_005256797.3"/>
</dbReference>
<dbReference type="RefSeq" id="XP_016880522.1">
    <property type="nucleotide sequence ID" value="XM_017025033.1"/>
</dbReference>
<dbReference type="RefSeq" id="XP_016880523.1">
    <property type="nucleotide sequence ID" value="XM_017025034.2"/>
</dbReference>
<dbReference type="RefSeq" id="XP_016880524.1">
    <property type="nucleotide sequence ID" value="XM_017025035.1"/>
</dbReference>
<dbReference type="RefSeq" id="XP_024306692.1">
    <property type="nucleotide sequence ID" value="XM_024450924.2"/>
</dbReference>
<dbReference type="RefSeq" id="XP_047292651.1">
    <property type="nucleotide sequence ID" value="XM_047436695.1"/>
</dbReference>
<dbReference type="RefSeq" id="XP_047292652.1">
    <property type="nucleotide sequence ID" value="XM_047436696.1"/>
</dbReference>
<dbReference type="RefSeq" id="XP_054173095.1">
    <property type="nucleotide sequence ID" value="XM_054317120.1"/>
</dbReference>
<dbReference type="RefSeq" id="XP_054173096.1">
    <property type="nucleotide sequence ID" value="XM_054317121.1"/>
</dbReference>
<dbReference type="RefSeq" id="XP_054173097.1">
    <property type="nucleotide sequence ID" value="XM_054317122.1"/>
</dbReference>
<dbReference type="RefSeq" id="XP_054173098.1">
    <property type="nucleotide sequence ID" value="XM_054317123.1"/>
</dbReference>
<dbReference type="PDB" id="5LSJ">
    <property type="method" value="X-ray"/>
    <property type="resolution" value="3.25 A"/>
    <property type="chains" value="A/C=1-205"/>
</dbReference>
<dbReference type="PDB" id="5LSK">
    <property type="method" value="X-ray"/>
    <property type="resolution" value="3.50 A"/>
    <property type="chains" value="A=1-205"/>
</dbReference>
<dbReference type="PDB" id="8PPR">
    <property type="method" value="EM"/>
    <property type="resolution" value="3.00 A"/>
    <property type="chains" value="M=1-205"/>
</dbReference>
<dbReference type="PDB" id="8Q5H">
    <property type="method" value="EM"/>
    <property type="resolution" value="4.50 A"/>
    <property type="chains" value="A=1-205"/>
</dbReference>
<dbReference type="PDBsum" id="5LSJ"/>
<dbReference type="PDBsum" id="5LSK"/>
<dbReference type="PDBsum" id="8PPR"/>
<dbReference type="PDBsum" id="8Q5H"/>
<dbReference type="EMDB" id="EMD-17814"/>
<dbReference type="EMDB" id="EMD-18179"/>
<dbReference type="EMDB" id="EMD-2549"/>
<dbReference type="SMR" id="Q9H081"/>
<dbReference type="BioGRID" id="122474">
    <property type="interactions" value="92"/>
</dbReference>
<dbReference type="ComplexPortal" id="CPX-5643">
    <property type="entry name" value="Kinetochore MIS12 complex"/>
</dbReference>
<dbReference type="CORUM" id="Q9H081"/>
<dbReference type="FunCoup" id="Q9H081">
    <property type="interactions" value="2265"/>
</dbReference>
<dbReference type="IntAct" id="Q9H081">
    <property type="interactions" value="66"/>
</dbReference>
<dbReference type="MINT" id="Q9H081"/>
<dbReference type="STRING" id="9606.ENSP00000370557"/>
<dbReference type="iPTMnet" id="Q9H081"/>
<dbReference type="PhosphoSitePlus" id="Q9H081"/>
<dbReference type="BioMuta" id="MIS12"/>
<dbReference type="DMDM" id="74733516"/>
<dbReference type="jPOST" id="Q9H081"/>
<dbReference type="MassIVE" id="Q9H081"/>
<dbReference type="PaxDb" id="9606-ENSP00000484532"/>
<dbReference type="PeptideAtlas" id="Q9H081"/>
<dbReference type="ProteomicsDB" id="80215"/>
<dbReference type="Pumba" id="Q9H081"/>
<dbReference type="TopDownProteomics" id="Q9H081"/>
<dbReference type="Antibodypedia" id="23713">
    <property type="antibodies" value="171 antibodies from 25 providers"/>
</dbReference>
<dbReference type="DNASU" id="79003"/>
<dbReference type="Ensembl" id="ENST00000381165.3">
    <property type="protein sequence ID" value="ENSP00000370557.3"/>
    <property type="gene ID" value="ENSG00000167842.16"/>
</dbReference>
<dbReference type="Ensembl" id="ENST00000573759.1">
    <property type="protein sequence ID" value="ENSP00000461252.1"/>
    <property type="gene ID" value="ENSG00000167842.16"/>
</dbReference>
<dbReference type="Ensembl" id="ENST00000611091.5">
    <property type="protein sequence ID" value="ENSP00000484532.1"/>
    <property type="gene ID" value="ENSG00000167842.16"/>
</dbReference>
<dbReference type="GeneID" id="79003"/>
<dbReference type="KEGG" id="hsa:79003"/>
<dbReference type="MANE-Select" id="ENST00000611091.5">
    <property type="protein sequence ID" value="ENSP00000484532.1"/>
    <property type="RefSeq nucleotide sequence ID" value="NM_001258217.2"/>
    <property type="RefSeq protein sequence ID" value="NP_001245146.1"/>
</dbReference>
<dbReference type="UCSC" id="uc002gcd.5">
    <property type="organism name" value="human"/>
</dbReference>
<dbReference type="AGR" id="HGNC:24967"/>
<dbReference type="CTD" id="79003"/>
<dbReference type="DisGeNET" id="79003"/>
<dbReference type="GeneCards" id="MIS12"/>
<dbReference type="HGNC" id="HGNC:24967">
    <property type="gene designation" value="MIS12"/>
</dbReference>
<dbReference type="HPA" id="ENSG00000167842">
    <property type="expression patterns" value="Low tissue specificity"/>
</dbReference>
<dbReference type="MIM" id="609178">
    <property type="type" value="gene"/>
</dbReference>
<dbReference type="neXtProt" id="NX_Q9H081"/>
<dbReference type="OpenTargets" id="ENSG00000167842"/>
<dbReference type="PharmGKB" id="PA134951024"/>
<dbReference type="VEuPathDB" id="HostDB:ENSG00000167842"/>
<dbReference type="eggNOG" id="ENOG502RXZ1">
    <property type="taxonomic scope" value="Eukaryota"/>
</dbReference>
<dbReference type="GeneTree" id="ENSGT00390000018665"/>
<dbReference type="HOGENOM" id="CLU_097032_0_0_1"/>
<dbReference type="InParanoid" id="Q9H081"/>
<dbReference type="OMA" id="DYLFEMM"/>
<dbReference type="OrthoDB" id="1884855at2759"/>
<dbReference type="PAN-GO" id="Q9H081">
    <property type="GO annotations" value="4 GO annotations based on evolutionary models"/>
</dbReference>
<dbReference type="PhylomeDB" id="Q9H081"/>
<dbReference type="TreeFam" id="TF101136"/>
<dbReference type="PathwayCommons" id="Q9H081"/>
<dbReference type="Reactome" id="R-HSA-141444">
    <property type="pathway name" value="Amplification of signal from unattached kinetochores via a MAD2 inhibitory signal"/>
</dbReference>
<dbReference type="Reactome" id="R-HSA-2467813">
    <property type="pathway name" value="Separation of Sister Chromatids"/>
</dbReference>
<dbReference type="Reactome" id="R-HSA-2500257">
    <property type="pathway name" value="Resolution of Sister Chromatid Cohesion"/>
</dbReference>
<dbReference type="Reactome" id="R-HSA-5663220">
    <property type="pathway name" value="RHO GTPases Activate Formins"/>
</dbReference>
<dbReference type="Reactome" id="R-HSA-68877">
    <property type="pathway name" value="Mitotic Prometaphase"/>
</dbReference>
<dbReference type="Reactome" id="R-HSA-9648025">
    <property type="pathway name" value="EML4 and NUDC in mitotic spindle formation"/>
</dbReference>
<dbReference type="SignaLink" id="Q9H081"/>
<dbReference type="SIGNOR" id="Q9H081"/>
<dbReference type="BioGRID-ORCS" id="79003">
    <property type="hits" value="648 hits in 1166 CRISPR screens"/>
</dbReference>
<dbReference type="ChiTaRS" id="MIS12">
    <property type="organism name" value="human"/>
</dbReference>
<dbReference type="GeneWiki" id="MIS12"/>
<dbReference type="GenomeRNAi" id="79003"/>
<dbReference type="Pharos" id="Q9H081">
    <property type="development level" value="Tbio"/>
</dbReference>
<dbReference type="PRO" id="PR:Q9H081"/>
<dbReference type="Proteomes" id="UP000005640">
    <property type="component" value="Chromosome 17"/>
</dbReference>
<dbReference type="RNAct" id="Q9H081">
    <property type="molecule type" value="protein"/>
</dbReference>
<dbReference type="Bgee" id="ENSG00000167842">
    <property type="expression patterns" value="Expressed in corpus epididymis and 198 other cell types or tissues"/>
</dbReference>
<dbReference type="ExpressionAtlas" id="Q9H081">
    <property type="expression patterns" value="baseline and differential"/>
</dbReference>
<dbReference type="GO" id="GO:0005829">
    <property type="term" value="C:cytosol"/>
    <property type="evidence" value="ECO:0000304"/>
    <property type="project" value="Reactome"/>
</dbReference>
<dbReference type="GO" id="GO:0000776">
    <property type="term" value="C:kinetochore"/>
    <property type="evidence" value="ECO:0000314"/>
    <property type="project" value="WormBase"/>
</dbReference>
<dbReference type="GO" id="GO:0000444">
    <property type="term" value="C:MIS12/MIND type complex"/>
    <property type="evidence" value="ECO:0000314"/>
    <property type="project" value="UniProtKB"/>
</dbReference>
<dbReference type="GO" id="GO:0005634">
    <property type="term" value="C:nucleus"/>
    <property type="evidence" value="ECO:0000314"/>
    <property type="project" value="LIFEdb"/>
</dbReference>
<dbReference type="GO" id="GO:0000940">
    <property type="term" value="C:outer kinetochore"/>
    <property type="evidence" value="ECO:0000314"/>
    <property type="project" value="UniProtKB"/>
</dbReference>
<dbReference type="GO" id="GO:0000922">
    <property type="term" value="C:spindle pole"/>
    <property type="evidence" value="ECO:0000303"/>
    <property type="project" value="ComplexPortal"/>
</dbReference>
<dbReference type="GO" id="GO:0051315">
    <property type="term" value="P:attachment of mitotic spindle microtubules to kinetochore"/>
    <property type="evidence" value="ECO:0000315"/>
    <property type="project" value="UniProtKB"/>
</dbReference>
<dbReference type="GO" id="GO:0008608">
    <property type="term" value="P:attachment of spindle microtubules to kinetochore"/>
    <property type="evidence" value="ECO:0000303"/>
    <property type="project" value="ComplexPortal"/>
</dbReference>
<dbReference type="GO" id="GO:0051301">
    <property type="term" value="P:cell division"/>
    <property type="evidence" value="ECO:0007669"/>
    <property type="project" value="UniProtKB-KW"/>
</dbReference>
<dbReference type="GO" id="GO:0007059">
    <property type="term" value="P:chromosome segregation"/>
    <property type="evidence" value="ECO:0000315"/>
    <property type="project" value="UniProtKB"/>
</dbReference>
<dbReference type="GO" id="GO:0051382">
    <property type="term" value="P:kinetochore assembly"/>
    <property type="evidence" value="ECO:0000314"/>
    <property type="project" value="UniProtKB"/>
</dbReference>
<dbReference type="GO" id="GO:0000070">
    <property type="term" value="P:mitotic sister chromatid segregation"/>
    <property type="evidence" value="ECO:0000318"/>
    <property type="project" value="GO_Central"/>
</dbReference>
<dbReference type="InterPro" id="IPR008685">
    <property type="entry name" value="Centromere_Mis12"/>
</dbReference>
<dbReference type="PANTHER" id="PTHR14527">
    <property type="entry name" value="PROTEIN MIS12 HOMOLOG"/>
    <property type="match status" value="1"/>
</dbReference>
<dbReference type="PANTHER" id="PTHR14527:SF2">
    <property type="entry name" value="PROTEIN MIS12 HOMOLOG"/>
    <property type="match status" value="1"/>
</dbReference>
<dbReference type="Pfam" id="PF05859">
    <property type="entry name" value="Mis12"/>
    <property type="match status" value="1"/>
</dbReference>